<feature type="signal peptide" evidence="2">
    <location>
        <begin position="1"/>
        <end position="19"/>
    </location>
</feature>
<feature type="chain" id="PRO_5000092274" description="Opiscorpine-4" evidence="6">
    <location>
        <begin position="20"/>
        <end position="95"/>
    </location>
</feature>
<feature type="domain" description="BetaSPN-type CS-alpha/beta" evidence="3">
    <location>
        <begin position="55"/>
        <end position="95"/>
    </location>
</feature>
<feature type="disulfide bond" evidence="3">
    <location>
        <begin position="58"/>
        <end position="82"/>
    </location>
</feature>
<feature type="disulfide bond" evidence="3">
    <location>
        <begin position="68"/>
        <end position="87"/>
    </location>
</feature>
<feature type="disulfide bond" evidence="3">
    <location>
        <begin position="72"/>
        <end position="89"/>
    </location>
</feature>
<evidence type="ECO:0000250" key="1">
    <source>
        <dbReference type="UniProtKB" id="Q5WR03"/>
    </source>
</evidence>
<evidence type="ECO:0000255" key="2"/>
<evidence type="ECO:0000255" key="3">
    <source>
        <dbReference type="PROSITE-ProRule" id="PRU01209"/>
    </source>
</evidence>
<evidence type="ECO:0000303" key="4">
    <source>
    </source>
</evidence>
<evidence type="ECO:0000305" key="5"/>
<evidence type="ECO:0000305" key="6">
    <source>
    </source>
</evidence>
<sequence>MNNKLTALIFLGLLAIASCKWLNEKSIQNKIDEKIGKNFLGGMAKAVVHKLAKNEFMCVANIDMTKSCDTHCQKASGEKGYCHGTKCKCGVPLSY</sequence>
<accession>Q5WQZ9</accession>
<name>KBX34_OPICA</name>
<organism>
    <name type="scientific">Opistophthalmus carinatus</name>
    <name type="common">African yellow leg scorpion</name>
    <dbReference type="NCBI Taxonomy" id="190115"/>
    <lineage>
        <taxon>Eukaryota</taxon>
        <taxon>Metazoa</taxon>
        <taxon>Ecdysozoa</taxon>
        <taxon>Arthropoda</taxon>
        <taxon>Chelicerata</taxon>
        <taxon>Arachnida</taxon>
        <taxon>Scorpiones</taxon>
        <taxon>Iurida</taxon>
        <taxon>Scorpionoidea</taxon>
        <taxon>Scorpionidae</taxon>
        <taxon>Opistophthalminae</taxon>
        <taxon>Opistophthalmus</taxon>
    </lineage>
</organism>
<proteinExistence type="inferred from homology"/>
<comment type="function">
    <text evidence="1">Has antimicrobial activity against yeasts and bacteria.</text>
</comment>
<comment type="subcellular location">
    <subcellularLocation>
        <location evidence="6">Secreted</location>
    </subcellularLocation>
</comment>
<comment type="tissue specificity">
    <text evidence="6">Expressed by the venom gland.</text>
</comment>
<comment type="similarity">
    <text evidence="5">Belongs to the long chain scorpion toxin family. Class 3 subfamily.</text>
</comment>
<keyword id="KW-0044">Antibiotic</keyword>
<keyword id="KW-0929">Antimicrobial</keyword>
<keyword id="KW-1015">Disulfide bond</keyword>
<keyword id="KW-0295">Fungicide</keyword>
<keyword id="KW-0964">Secreted</keyword>
<keyword id="KW-0732">Signal</keyword>
<keyword id="KW-0800">Toxin</keyword>
<dbReference type="EMBL" id="AY423485">
    <property type="protein sequence ID" value="AAQ94356.1"/>
    <property type="molecule type" value="mRNA"/>
</dbReference>
<dbReference type="SMR" id="Q5WQZ9"/>
<dbReference type="GO" id="GO:0005576">
    <property type="term" value="C:extracellular region"/>
    <property type="evidence" value="ECO:0007669"/>
    <property type="project" value="UniProtKB-SubCell"/>
</dbReference>
<dbReference type="GO" id="GO:0090729">
    <property type="term" value="F:toxin activity"/>
    <property type="evidence" value="ECO:0007669"/>
    <property type="project" value="UniProtKB-KW"/>
</dbReference>
<dbReference type="GO" id="GO:0042742">
    <property type="term" value="P:defense response to bacterium"/>
    <property type="evidence" value="ECO:0007669"/>
    <property type="project" value="UniProtKB-KW"/>
</dbReference>
<dbReference type="GO" id="GO:0050832">
    <property type="term" value="P:defense response to fungus"/>
    <property type="evidence" value="ECO:0007669"/>
    <property type="project" value="UniProtKB-KW"/>
</dbReference>
<dbReference type="GO" id="GO:0031640">
    <property type="term" value="P:killing of cells of another organism"/>
    <property type="evidence" value="ECO:0007669"/>
    <property type="project" value="UniProtKB-KW"/>
</dbReference>
<dbReference type="InterPro" id="IPR029237">
    <property type="entry name" value="Long_scorpion_toxin_alpha/beta"/>
</dbReference>
<dbReference type="InterPro" id="IPR036574">
    <property type="entry name" value="Scorpion_toxin-like_sf"/>
</dbReference>
<dbReference type="Pfam" id="PF14866">
    <property type="entry name" value="Scorpion_toxin_alpha-beta"/>
    <property type="match status" value="1"/>
</dbReference>
<dbReference type="SUPFAM" id="SSF57095">
    <property type="entry name" value="Scorpion toxin-like"/>
    <property type="match status" value="1"/>
</dbReference>
<dbReference type="PROSITE" id="PS51862">
    <property type="entry name" value="BSPN_CSAB"/>
    <property type="match status" value="1"/>
</dbReference>
<reference key="1">
    <citation type="journal article" date="2004" name="Cell. Mol. Life Sci.">
        <title>The scorpine family of defensins: gene structure, alternative polyadenylation and fold recognition.</title>
        <authorList>
            <person name="Zhu S."/>
            <person name="Tytgat J."/>
        </authorList>
    </citation>
    <scope>NUCLEOTIDE SEQUENCE [MRNA]</scope>
    <source>
        <tissue>Venom gland</tissue>
    </source>
</reference>
<protein>
    <recommendedName>
        <fullName evidence="4">Opiscorpine-4</fullName>
    </recommendedName>
</protein>